<accession>Q7ZWN0</accession>
<comment type="function">
    <text evidence="1">Involved in the maturation of specific proteins in the endoplasmic reticulum.</text>
</comment>
<comment type="subcellular location">
    <subcellularLocation>
        <location evidence="1">Endoplasmic reticulum membrane</location>
        <topology evidence="1">Multi-pass membrane protein</topology>
    </subcellularLocation>
</comment>
<comment type="similarity">
    <text evidence="4">Belongs to the lipase maturation factor family.</text>
</comment>
<dbReference type="EMBL" id="BC046869">
    <property type="protein sequence ID" value="AAH46869.1"/>
    <property type="molecule type" value="mRNA"/>
</dbReference>
<dbReference type="RefSeq" id="NP_001079679.1">
    <property type="nucleotide sequence ID" value="NM_001086210.1"/>
</dbReference>
<dbReference type="GlyCosmos" id="Q7ZWN0">
    <property type="glycosylation" value="1 site, No reported glycans"/>
</dbReference>
<dbReference type="DNASU" id="379366"/>
<dbReference type="GeneID" id="379366"/>
<dbReference type="KEGG" id="xla:379366"/>
<dbReference type="AGR" id="Xenbase:XB-GENE-974445"/>
<dbReference type="CTD" id="379366"/>
<dbReference type="Xenbase" id="XB-GENE-974445">
    <property type="gene designation" value="lmf2.L"/>
</dbReference>
<dbReference type="OrthoDB" id="5988002at2759"/>
<dbReference type="Proteomes" id="UP000186698">
    <property type="component" value="Chromosome 3L"/>
</dbReference>
<dbReference type="Bgee" id="379366">
    <property type="expression patterns" value="Expressed in egg cell and 19 other cell types or tissues"/>
</dbReference>
<dbReference type="GO" id="GO:0005789">
    <property type="term" value="C:endoplasmic reticulum membrane"/>
    <property type="evidence" value="ECO:0000318"/>
    <property type="project" value="GO_Central"/>
</dbReference>
<dbReference type="GO" id="GO:0051604">
    <property type="term" value="P:protein maturation"/>
    <property type="evidence" value="ECO:0000318"/>
    <property type="project" value="GO_Central"/>
</dbReference>
<dbReference type="InterPro" id="IPR009613">
    <property type="entry name" value="LMF"/>
</dbReference>
<dbReference type="PANTHER" id="PTHR14463">
    <property type="entry name" value="LIPASE MATURATION FACTOR"/>
    <property type="match status" value="1"/>
</dbReference>
<dbReference type="PANTHER" id="PTHR14463:SF5">
    <property type="entry name" value="LIPASE MATURATION FACTOR 2"/>
    <property type="match status" value="1"/>
</dbReference>
<dbReference type="Pfam" id="PF06762">
    <property type="entry name" value="LMF1"/>
    <property type="match status" value="1"/>
</dbReference>
<dbReference type="Pfam" id="PF25179">
    <property type="entry name" value="LMF1_C"/>
    <property type="match status" value="1"/>
</dbReference>
<organism>
    <name type="scientific">Xenopus laevis</name>
    <name type="common">African clawed frog</name>
    <dbReference type="NCBI Taxonomy" id="8355"/>
    <lineage>
        <taxon>Eukaryota</taxon>
        <taxon>Metazoa</taxon>
        <taxon>Chordata</taxon>
        <taxon>Craniata</taxon>
        <taxon>Vertebrata</taxon>
        <taxon>Euteleostomi</taxon>
        <taxon>Amphibia</taxon>
        <taxon>Batrachia</taxon>
        <taxon>Anura</taxon>
        <taxon>Pipoidea</taxon>
        <taxon>Pipidae</taxon>
        <taxon>Xenopodinae</taxon>
        <taxon>Xenopus</taxon>
        <taxon>Xenopus</taxon>
    </lineage>
</organism>
<proteinExistence type="evidence at transcript level"/>
<name>LMF2_XENLA</name>
<protein>
    <recommendedName>
        <fullName>Lipase maturation factor 2</fullName>
    </recommendedName>
</protein>
<keyword id="KW-0256">Endoplasmic reticulum</keyword>
<keyword id="KW-0325">Glycoprotein</keyword>
<keyword id="KW-0472">Membrane</keyword>
<keyword id="KW-1185">Reference proteome</keyword>
<keyword id="KW-0812">Transmembrane</keyword>
<keyword id="KW-1133">Transmembrane helix</keyword>
<gene>
    <name type="primary">lmf2</name>
</gene>
<feature type="chain" id="PRO_0000324514" description="Lipase maturation factor 2">
    <location>
        <begin position="1"/>
        <end position="707"/>
    </location>
</feature>
<feature type="transmembrane region" description="Helical" evidence="2">
    <location>
        <begin position="10"/>
        <end position="30"/>
    </location>
</feature>
<feature type="transmembrane region" description="Helical" evidence="2">
    <location>
        <begin position="78"/>
        <end position="98"/>
    </location>
</feature>
<feature type="transmembrane region" description="Helical" evidence="2">
    <location>
        <begin position="102"/>
        <end position="122"/>
    </location>
</feature>
<feature type="transmembrane region" description="Helical" evidence="2">
    <location>
        <begin position="126"/>
        <end position="146"/>
    </location>
</feature>
<feature type="transmembrane region" description="Helical" evidence="2">
    <location>
        <begin position="158"/>
        <end position="178"/>
    </location>
</feature>
<feature type="transmembrane region" description="Helical" evidence="2">
    <location>
        <begin position="220"/>
        <end position="240"/>
    </location>
</feature>
<feature type="transmembrane region" description="Helical" evidence="2">
    <location>
        <begin position="256"/>
        <end position="276"/>
    </location>
</feature>
<feature type="transmembrane region" description="Helical" evidence="2">
    <location>
        <begin position="309"/>
        <end position="329"/>
    </location>
</feature>
<feature type="transmembrane region" description="Helical" evidence="2">
    <location>
        <begin position="358"/>
        <end position="378"/>
    </location>
</feature>
<feature type="transmembrane region" description="Helical" evidence="2">
    <location>
        <begin position="395"/>
        <end position="415"/>
    </location>
</feature>
<feature type="transmembrane region" description="Helical" evidence="2">
    <location>
        <begin position="634"/>
        <end position="654"/>
    </location>
</feature>
<feature type="region of interest" description="Disordered" evidence="3">
    <location>
        <begin position="661"/>
        <end position="707"/>
    </location>
</feature>
<feature type="compositionally biased region" description="Low complexity" evidence="3">
    <location>
        <begin position="680"/>
        <end position="694"/>
    </location>
</feature>
<feature type="compositionally biased region" description="Basic and acidic residues" evidence="3">
    <location>
        <begin position="696"/>
        <end position="707"/>
    </location>
</feature>
<feature type="glycosylation site" description="N-linked (GlcNAc...) asparagine" evidence="2">
    <location>
        <position position="483"/>
    </location>
</feature>
<sequence length="707" mass="82267">MGEHRLARSAFLWGLSGIYLFAFVSLYVQIPGLYGREGILPAWKMLRFTGKGFWEQMKDSPSLLWFGPRLGLDTEMTMELICLLGALLSLGALLFSCLRDSLVFLLLWVFYLSLYQVGQVFLYFQWDSLLLETGFLAILVAPLHAMRWKTSVWSAHDGVTFWLTRWLLFRLMFASGVVKLTSRCPTWWGLTALTYHYETQCIPNPAAWYAHQLPVWLQKFSVVATFFIEIGVPWLFFLPFRRLRLFSFYSQVLLQILIIITGNYNFFNLLTIVLCCSMLDDQHIAFFQRHKKTQHKGGIATSAFSLRSLVSLLEIPIFGLLVFWTVKYFDLQINWDKHSLESRTAFTYHDFQQWLRTITFPSIWIAAASLGWEILKGMYRSASVRGFFWKLWSTLQWLMFSCAAAAMFTISLVPYTYMDFESNGQLWPEVHQMFNTVDRYQLVNSYGLFRRMTGVGGRPEVVVEGSFDRETWTEIEFMYKPGNISTIPTVIVPHQPRLDWQMWFAALSHHSHSPWFASFVYRLLQGNKDVIHLVQNDESLYPFHANPPTYIRAQQYKYWFTEVDQSGHMPKSWWRRRHVEEFFPAVFLDDPFLDNLLSQHGLKDKPPARRSLDAPIPFVLKLIRDFLHPLPAPLLLHSFIFGIFTIYFLQAMFGGVSRPSVAKQRHSMPPNEKKKQKPNSGQGESASSKSSGHGTDTVRRNKKNEKS</sequence>
<reference key="1">
    <citation type="submission" date="2003-02" db="EMBL/GenBank/DDBJ databases">
        <authorList>
            <consortium name="NIH - Xenopus Gene Collection (XGC) project"/>
        </authorList>
    </citation>
    <scope>NUCLEOTIDE SEQUENCE [LARGE SCALE MRNA]</scope>
    <source>
        <tissue>Embryo</tissue>
    </source>
</reference>
<evidence type="ECO:0000250" key="1"/>
<evidence type="ECO:0000255" key="2"/>
<evidence type="ECO:0000256" key="3">
    <source>
        <dbReference type="SAM" id="MobiDB-lite"/>
    </source>
</evidence>
<evidence type="ECO:0000305" key="4"/>